<name>ASSY_THEP1</name>
<evidence type="ECO:0000255" key="1">
    <source>
        <dbReference type="HAMAP-Rule" id="MF_00005"/>
    </source>
</evidence>
<gene>
    <name evidence="1" type="primary">argG</name>
    <name type="ordered locus">Tpet_1067</name>
</gene>
<accession>A5ILL1</accession>
<dbReference type="EC" id="6.3.4.5" evidence="1"/>
<dbReference type="EMBL" id="CP000702">
    <property type="protein sequence ID" value="ABQ47084.1"/>
    <property type="molecule type" value="Genomic_DNA"/>
</dbReference>
<dbReference type="RefSeq" id="WP_011943612.1">
    <property type="nucleotide sequence ID" value="NC_009486.1"/>
</dbReference>
<dbReference type="SMR" id="A5ILL1"/>
<dbReference type="STRING" id="390874.Tpet_1067"/>
<dbReference type="KEGG" id="tpt:Tpet_1067"/>
<dbReference type="eggNOG" id="COG0137">
    <property type="taxonomic scope" value="Bacteria"/>
</dbReference>
<dbReference type="HOGENOM" id="CLU_032784_4_2_0"/>
<dbReference type="UniPathway" id="UPA00068">
    <property type="reaction ID" value="UER00113"/>
</dbReference>
<dbReference type="Proteomes" id="UP000006558">
    <property type="component" value="Chromosome"/>
</dbReference>
<dbReference type="GO" id="GO:0005737">
    <property type="term" value="C:cytoplasm"/>
    <property type="evidence" value="ECO:0007669"/>
    <property type="project" value="UniProtKB-SubCell"/>
</dbReference>
<dbReference type="GO" id="GO:0004055">
    <property type="term" value="F:argininosuccinate synthase activity"/>
    <property type="evidence" value="ECO:0007669"/>
    <property type="project" value="UniProtKB-UniRule"/>
</dbReference>
<dbReference type="GO" id="GO:0005524">
    <property type="term" value="F:ATP binding"/>
    <property type="evidence" value="ECO:0007669"/>
    <property type="project" value="UniProtKB-UniRule"/>
</dbReference>
<dbReference type="GO" id="GO:0000053">
    <property type="term" value="P:argininosuccinate metabolic process"/>
    <property type="evidence" value="ECO:0007669"/>
    <property type="project" value="TreeGrafter"/>
</dbReference>
<dbReference type="GO" id="GO:0006526">
    <property type="term" value="P:L-arginine biosynthetic process"/>
    <property type="evidence" value="ECO:0007669"/>
    <property type="project" value="UniProtKB-UniRule"/>
</dbReference>
<dbReference type="GO" id="GO:0000050">
    <property type="term" value="P:urea cycle"/>
    <property type="evidence" value="ECO:0007669"/>
    <property type="project" value="TreeGrafter"/>
</dbReference>
<dbReference type="CDD" id="cd01999">
    <property type="entry name" value="ASS"/>
    <property type="match status" value="1"/>
</dbReference>
<dbReference type="FunFam" id="3.40.50.620:FF:000019">
    <property type="entry name" value="Argininosuccinate synthase"/>
    <property type="match status" value="1"/>
</dbReference>
<dbReference type="FunFam" id="3.90.1260.10:FF:000007">
    <property type="entry name" value="Argininosuccinate synthase"/>
    <property type="match status" value="1"/>
</dbReference>
<dbReference type="Gene3D" id="3.90.1260.10">
    <property type="entry name" value="Argininosuccinate synthetase, chain A, domain 2"/>
    <property type="match status" value="1"/>
</dbReference>
<dbReference type="Gene3D" id="3.40.50.620">
    <property type="entry name" value="HUPs"/>
    <property type="match status" value="1"/>
</dbReference>
<dbReference type="Gene3D" id="1.20.5.470">
    <property type="entry name" value="Single helix bin"/>
    <property type="match status" value="1"/>
</dbReference>
<dbReference type="HAMAP" id="MF_00005">
    <property type="entry name" value="Arg_succ_synth_type1"/>
    <property type="match status" value="1"/>
</dbReference>
<dbReference type="InterPro" id="IPR048268">
    <property type="entry name" value="Arginosuc_syn_C"/>
</dbReference>
<dbReference type="InterPro" id="IPR048267">
    <property type="entry name" value="Arginosuc_syn_N"/>
</dbReference>
<dbReference type="InterPro" id="IPR001518">
    <property type="entry name" value="Arginosuc_synth"/>
</dbReference>
<dbReference type="InterPro" id="IPR018223">
    <property type="entry name" value="Arginosuc_synth_CS"/>
</dbReference>
<dbReference type="InterPro" id="IPR023434">
    <property type="entry name" value="Arginosuc_synth_type_1_subfam"/>
</dbReference>
<dbReference type="InterPro" id="IPR024074">
    <property type="entry name" value="AS_cat/multimer_dom_body"/>
</dbReference>
<dbReference type="InterPro" id="IPR014729">
    <property type="entry name" value="Rossmann-like_a/b/a_fold"/>
</dbReference>
<dbReference type="NCBIfam" id="TIGR00032">
    <property type="entry name" value="argG"/>
    <property type="match status" value="1"/>
</dbReference>
<dbReference type="NCBIfam" id="NF001770">
    <property type="entry name" value="PRK00509.1"/>
    <property type="match status" value="1"/>
</dbReference>
<dbReference type="PANTHER" id="PTHR11587">
    <property type="entry name" value="ARGININOSUCCINATE SYNTHASE"/>
    <property type="match status" value="1"/>
</dbReference>
<dbReference type="PANTHER" id="PTHR11587:SF2">
    <property type="entry name" value="ARGININOSUCCINATE SYNTHASE"/>
    <property type="match status" value="1"/>
</dbReference>
<dbReference type="Pfam" id="PF20979">
    <property type="entry name" value="Arginosuc_syn_C"/>
    <property type="match status" value="1"/>
</dbReference>
<dbReference type="Pfam" id="PF00764">
    <property type="entry name" value="Arginosuc_synth"/>
    <property type="match status" value="1"/>
</dbReference>
<dbReference type="SUPFAM" id="SSF52402">
    <property type="entry name" value="Adenine nucleotide alpha hydrolases-like"/>
    <property type="match status" value="1"/>
</dbReference>
<dbReference type="SUPFAM" id="SSF69864">
    <property type="entry name" value="Argininosuccinate synthetase, C-terminal domain"/>
    <property type="match status" value="1"/>
</dbReference>
<dbReference type="PROSITE" id="PS00564">
    <property type="entry name" value="ARGININOSUCCIN_SYN_1"/>
    <property type="match status" value="1"/>
</dbReference>
<dbReference type="PROSITE" id="PS00565">
    <property type="entry name" value="ARGININOSUCCIN_SYN_2"/>
    <property type="match status" value="1"/>
</dbReference>
<sequence length="409" mass="46067">MKEKVVLAYSGGLDTSVILKWLCEKGFDVIAYVANVGQKDDFDAIKEKALKTGASKVYVEDLRREFVTDYIFTALLGNAMYEGRYLLGTAIARPLIAKRQVEIAEKEGAQYVAHGATGKGNDQVRFELTYAALNPNLKVISPWKDPEFLAKFKGRTDLINYAMEKGIPIKVSKKRPYSEDENLMHISHEAGKLEDPAYIPDEDVFTWTVSPKDAPDEETLLEIHFENGIPVKVVNLKDGTEKTDPLELFEYLNEVGAKNGVGRLDMVENRFIGIKSRGVYETPGATILWIAHRDLEGITMDKEVMHLRDMLAPKFAELIYNGFWFSPEMEFLLAAFRKAQENVTGKVTVSIYKGNVMPVARYSPYSLYNPELSSMDVEGGFNATDSKGFINIHALRLKVHQLVKKGYQK</sequence>
<reference key="1">
    <citation type="submission" date="2007-05" db="EMBL/GenBank/DDBJ databases">
        <title>Complete sequence of Thermotoga petrophila RKU-1.</title>
        <authorList>
            <consortium name="US DOE Joint Genome Institute"/>
            <person name="Copeland A."/>
            <person name="Lucas S."/>
            <person name="Lapidus A."/>
            <person name="Barry K."/>
            <person name="Glavina del Rio T."/>
            <person name="Dalin E."/>
            <person name="Tice H."/>
            <person name="Pitluck S."/>
            <person name="Sims D."/>
            <person name="Brettin T."/>
            <person name="Bruce D."/>
            <person name="Detter J.C."/>
            <person name="Han C."/>
            <person name="Tapia R."/>
            <person name="Schmutz J."/>
            <person name="Larimer F."/>
            <person name="Land M."/>
            <person name="Hauser L."/>
            <person name="Kyrpides N."/>
            <person name="Mikhailova N."/>
            <person name="Nelson K."/>
            <person name="Gogarten J.P."/>
            <person name="Noll K."/>
            <person name="Richardson P."/>
        </authorList>
    </citation>
    <scope>NUCLEOTIDE SEQUENCE [LARGE SCALE GENOMIC DNA]</scope>
    <source>
        <strain>ATCC BAA-488 / DSM 13995 / JCM 10881 / RKU-1</strain>
    </source>
</reference>
<keyword id="KW-0028">Amino-acid biosynthesis</keyword>
<keyword id="KW-0055">Arginine biosynthesis</keyword>
<keyword id="KW-0067">ATP-binding</keyword>
<keyword id="KW-0963">Cytoplasm</keyword>
<keyword id="KW-0436">Ligase</keyword>
<keyword id="KW-0547">Nucleotide-binding</keyword>
<proteinExistence type="inferred from homology"/>
<organism>
    <name type="scientific">Thermotoga petrophila (strain ATCC BAA-488 / DSM 13995 / JCM 10881 / RKU-1)</name>
    <dbReference type="NCBI Taxonomy" id="390874"/>
    <lineage>
        <taxon>Bacteria</taxon>
        <taxon>Thermotogati</taxon>
        <taxon>Thermotogota</taxon>
        <taxon>Thermotogae</taxon>
        <taxon>Thermotogales</taxon>
        <taxon>Thermotogaceae</taxon>
        <taxon>Thermotoga</taxon>
    </lineage>
</organism>
<feature type="chain" id="PRO_1000000445" description="Argininosuccinate synthase">
    <location>
        <begin position="1"/>
        <end position="409"/>
    </location>
</feature>
<feature type="binding site" evidence="1">
    <location>
        <begin position="8"/>
        <end position="16"/>
    </location>
    <ligand>
        <name>ATP</name>
        <dbReference type="ChEBI" id="CHEBI:30616"/>
    </ligand>
</feature>
<feature type="binding site" evidence="1">
    <location>
        <position position="34"/>
    </location>
    <ligand>
        <name>ATP</name>
        <dbReference type="ChEBI" id="CHEBI:30616"/>
    </ligand>
</feature>
<feature type="binding site" evidence="1">
    <location>
        <position position="85"/>
    </location>
    <ligand>
        <name>L-citrulline</name>
        <dbReference type="ChEBI" id="CHEBI:57743"/>
    </ligand>
</feature>
<feature type="binding site" evidence="1">
    <location>
        <position position="115"/>
    </location>
    <ligand>
        <name>ATP</name>
        <dbReference type="ChEBI" id="CHEBI:30616"/>
    </ligand>
</feature>
<feature type="binding site" evidence="1">
    <location>
        <position position="117"/>
    </location>
    <ligand>
        <name>L-aspartate</name>
        <dbReference type="ChEBI" id="CHEBI:29991"/>
    </ligand>
</feature>
<feature type="binding site" evidence="1">
    <location>
        <position position="121"/>
    </location>
    <ligand>
        <name>L-aspartate</name>
        <dbReference type="ChEBI" id="CHEBI:29991"/>
    </ligand>
</feature>
<feature type="binding site" evidence="1">
    <location>
        <position position="121"/>
    </location>
    <ligand>
        <name>L-citrulline</name>
        <dbReference type="ChEBI" id="CHEBI:57743"/>
    </ligand>
</feature>
<feature type="binding site" evidence="1">
    <location>
        <position position="122"/>
    </location>
    <ligand>
        <name>L-aspartate</name>
        <dbReference type="ChEBI" id="CHEBI:29991"/>
    </ligand>
</feature>
<feature type="binding site" evidence="1">
    <location>
        <position position="125"/>
    </location>
    <ligand>
        <name>L-citrulline</name>
        <dbReference type="ChEBI" id="CHEBI:57743"/>
    </ligand>
</feature>
<feature type="binding site" evidence="1">
    <location>
        <position position="178"/>
    </location>
    <ligand>
        <name>L-citrulline</name>
        <dbReference type="ChEBI" id="CHEBI:57743"/>
    </ligand>
</feature>
<feature type="binding site" evidence="1">
    <location>
        <position position="187"/>
    </location>
    <ligand>
        <name>L-citrulline</name>
        <dbReference type="ChEBI" id="CHEBI:57743"/>
    </ligand>
</feature>
<feature type="binding site" evidence="1">
    <location>
        <position position="268"/>
    </location>
    <ligand>
        <name>L-citrulline</name>
        <dbReference type="ChEBI" id="CHEBI:57743"/>
    </ligand>
</feature>
<feature type="binding site" evidence="1">
    <location>
        <position position="280"/>
    </location>
    <ligand>
        <name>L-citrulline</name>
        <dbReference type="ChEBI" id="CHEBI:57743"/>
    </ligand>
</feature>
<protein>
    <recommendedName>
        <fullName evidence="1">Argininosuccinate synthase</fullName>
        <ecNumber evidence="1">6.3.4.5</ecNumber>
    </recommendedName>
    <alternativeName>
        <fullName evidence="1">Citrulline--aspartate ligase</fullName>
    </alternativeName>
</protein>
<comment type="catalytic activity">
    <reaction evidence="1">
        <text>L-citrulline + L-aspartate + ATP = 2-(N(omega)-L-arginino)succinate + AMP + diphosphate + H(+)</text>
        <dbReference type="Rhea" id="RHEA:10932"/>
        <dbReference type="ChEBI" id="CHEBI:15378"/>
        <dbReference type="ChEBI" id="CHEBI:29991"/>
        <dbReference type="ChEBI" id="CHEBI:30616"/>
        <dbReference type="ChEBI" id="CHEBI:33019"/>
        <dbReference type="ChEBI" id="CHEBI:57472"/>
        <dbReference type="ChEBI" id="CHEBI:57743"/>
        <dbReference type="ChEBI" id="CHEBI:456215"/>
        <dbReference type="EC" id="6.3.4.5"/>
    </reaction>
</comment>
<comment type="pathway">
    <text evidence="1">Amino-acid biosynthesis; L-arginine biosynthesis; L-arginine from L-ornithine and carbamoyl phosphate: step 2/3.</text>
</comment>
<comment type="subunit">
    <text evidence="1">Homotetramer.</text>
</comment>
<comment type="subcellular location">
    <subcellularLocation>
        <location evidence="1">Cytoplasm</location>
    </subcellularLocation>
</comment>
<comment type="similarity">
    <text evidence="1">Belongs to the argininosuccinate synthase family. Type 1 subfamily.</text>
</comment>